<protein>
    <recommendedName>
        <fullName evidence="2">Small ribosomal subunit protein uS12</fullName>
    </recommendedName>
    <alternativeName>
        <fullName evidence="4">30S ribosomal protein S12</fullName>
    </alternativeName>
</protein>
<feature type="chain" id="PRO_1000049803" description="Small ribosomal subunit protein uS12">
    <location>
        <begin position="1"/>
        <end position="123"/>
    </location>
</feature>
<feature type="region of interest" description="Disordered" evidence="3">
    <location>
        <begin position="1"/>
        <end position="22"/>
    </location>
</feature>
<feature type="region of interest" description="Disordered" evidence="3">
    <location>
        <begin position="100"/>
        <end position="123"/>
    </location>
</feature>
<feature type="compositionally biased region" description="Basic residues" evidence="3">
    <location>
        <begin position="111"/>
        <end position="123"/>
    </location>
</feature>
<feature type="modified residue" description="3-methylthioaspartic acid" evidence="1">
    <location>
        <position position="89"/>
    </location>
</feature>
<comment type="function">
    <text evidence="2">With S4 and S5 plays an important role in translational accuracy.</text>
</comment>
<comment type="function">
    <text evidence="2">Interacts with and stabilizes bases of the 16S rRNA that are involved in tRNA selection in the A site and with the mRNA backbone. Located at the interface of the 30S and 50S subunits, it traverses the body of the 30S subunit contacting proteins on the other side and probably holding the rRNA structure together. The combined cluster of proteins S8, S12 and S17 appears to hold together the shoulder and platform of the 30S subunit.</text>
</comment>
<comment type="subunit">
    <text evidence="2">Part of the 30S ribosomal subunit. Contacts proteins S8 and S17. May interact with IF1 in the 30S initiation complex.</text>
</comment>
<comment type="similarity">
    <text evidence="2">Belongs to the universal ribosomal protein uS12 family.</text>
</comment>
<proteinExistence type="inferred from homology"/>
<evidence type="ECO:0000250" key="1"/>
<evidence type="ECO:0000255" key="2">
    <source>
        <dbReference type="HAMAP-Rule" id="MF_00403"/>
    </source>
</evidence>
<evidence type="ECO:0000256" key="3">
    <source>
        <dbReference type="SAM" id="MobiDB-lite"/>
    </source>
</evidence>
<evidence type="ECO:0000305" key="4"/>
<gene>
    <name evidence="2" type="primary">rpsL</name>
    <name type="ordered locus">Pput_0482</name>
</gene>
<sequence length="123" mass="13727">MATINQLVRQPRKRSVEKSDVPALQNCPQRRGVCTRVYTTTPKKPNSALRKVCRVRLTNGFEVSSYIGGEGHNLQEHSVVLIRGGRVKDLPGVRYHTVRGSLDTSGVKGRNQGRSKYGTKRPK</sequence>
<dbReference type="EMBL" id="CP000712">
    <property type="protein sequence ID" value="ABQ76652.1"/>
    <property type="molecule type" value="Genomic_DNA"/>
</dbReference>
<dbReference type="SMR" id="A5VXP2"/>
<dbReference type="KEGG" id="ppf:Pput_0482"/>
<dbReference type="eggNOG" id="COG0048">
    <property type="taxonomic scope" value="Bacteria"/>
</dbReference>
<dbReference type="HOGENOM" id="CLU_104295_1_2_6"/>
<dbReference type="GO" id="GO:0015935">
    <property type="term" value="C:small ribosomal subunit"/>
    <property type="evidence" value="ECO:0007669"/>
    <property type="project" value="InterPro"/>
</dbReference>
<dbReference type="GO" id="GO:0019843">
    <property type="term" value="F:rRNA binding"/>
    <property type="evidence" value="ECO:0007669"/>
    <property type="project" value="UniProtKB-UniRule"/>
</dbReference>
<dbReference type="GO" id="GO:0003735">
    <property type="term" value="F:structural constituent of ribosome"/>
    <property type="evidence" value="ECO:0007669"/>
    <property type="project" value="InterPro"/>
</dbReference>
<dbReference type="GO" id="GO:0000049">
    <property type="term" value="F:tRNA binding"/>
    <property type="evidence" value="ECO:0007669"/>
    <property type="project" value="UniProtKB-UniRule"/>
</dbReference>
<dbReference type="GO" id="GO:0006412">
    <property type="term" value="P:translation"/>
    <property type="evidence" value="ECO:0007669"/>
    <property type="project" value="UniProtKB-UniRule"/>
</dbReference>
<dbReference type="CDD" id="cd03368">
    <property type="entry name" value="Ribosomal_S12"/>
    <property type="match status" value="1"/>
</dbReference>
<dbReference type="FunFam" id="2.40.50.140:FF:000001">
    <property type="entry name" value="30S ribosomal protein S12"/>
    <property type="match status" value="1"/>
</dbReference>
<dbReference type="Gene3D" id="2.40.50.140">
    <property type="entry name" value="Nucleic acid-binding proteins"/>
    <property type="match status" value="1"/>
</dbReference>
<dbReference type="HAMAP" id="MF_00403_B">
    <property type="entry name" value="Ribosomal_uS12_B"/>
    <property type="match status" value="1"/>
</dbReference>
<dbReference type="InterPro" id="IPR012340">
    <property type="entry name" value="NA-bd_OB-fold"/>
</dbReference>
<dbReference type="InterPro" id="IPR006032">
    <property type="entry name" value="Ribosomal_uS12"/>
</dbReference>
<dbReference type="InterPro" id="IPR005679">
    <property type="entry name" value="Ribosomal_uS12_bac"/>
</dbReference>
<dbReference type="NCBIfam" id="TIGR00981">
    <property type="entry name" value="rpsL_bact"/>
    <property type="match status" value="1"/>
</dbReference>
<dbReference type="PANTHER" id="PTHR11652">
    <property type="entry name" value="30S RIBOSOMAL PROTEIN S12 FAMILY MEMBER"/>
    <property type="match status" value="1"/>
</dbReference>
<dbReference type="Pfam" id="PF00164">
    <property type="entry name" value="Ribosom_S12_S23"/>
    <property type="match status" value="1"/>
</dbReference>
<dbReference type="PIRSF" id="PIRSF002133">
    <property type="entry name" value="Ribosomal_S12/S23"/>
    <property type="match status" value="1"/>
</dbReference>
<dbReference type="PRINTS" id="PR01034">
    <property type="entry name" value="RIBOSOMALS12"/>
</dbReference>
<dbReference type="SUPFAM" id="SSF50249">
    <property type="entry name" value="Nucleic acid-binding proteins"/>
    <property type="match status" value="1"/>
</dbReference>
<dbReference type="PROSITE" id="PS00055">
    <property type="entry name" value="RIBOSOMAL_S12"/>
    <property type="match status" value="1"/>
</dbReference>
<reference key="1">
    <citation type="submission" date="2007-05" db="EMBL/GenBank/DDBJ databases">
        <title>Complete sequence of Pseudomonas putida F1.</title>
        <authorList>
            <consortium name="US DOE Joint Genome Institute"/>
            <person name="Copeland A."/>
            <person name="Lucas S."/>
            <person name="Lapidus A."/>
            <person name="Barry K."/>
            <person name="Detter J.C."/>
            <person name="Glavina del Rio T."/>
            <person name="Hammon N."/>
            <person name="Israni S."/>
            <person name="Dalin E."/>
            <person name="Tice H."/>
            <person name="Pitluck S."/>
            <person name="Chain P."/>
            <person name="Malfatti S."/>
            <person name="Shin M."/>
            <person name="Vergez L."/>
            <person name="Schmutz J."/>
            <person name="Larimer F."/>
            <person name="Land M."/>
            <person name="Hauser L."/>
            <person name="Kyrpides N."/>
            <person name="Lykidis A."/>
            <person name="Parales R."/>
            <person name="Richardson P."/>
        </authorList>
    </citation>
    <scope>NUCLEOTIDE SEQUENCE [LARGE SCALE GENOMIC DNA]</scope>
    <source>
        <strain>ATCC 700007 / DSM 6899 / JCM 31910 / BCRC 17059 / LMG 24140 / F1</strain>
    </source>
</reference>
<name>RS12_PSEP1</name>
<accession>A5VXP2</accession>
<organism>
    <name type="scientific">Pseudomonas putida (strain ATCC 700007 / DSM 6899 / JCM 31910 / BCRC 17059 / LMG 24140 / F1)</name>
    <dbReference type="NCBI Taxonomy" id="351746"/>
    <lineage>
        <taxon>Bacteria</taxon>
        <taxon>Pseudomonadati</taxon>
        <taxon>Pseudomonadota</taxon>
        <taxon>Gammaproteobacteria</taxon>
        <taxon>Pseudomonadales</taxon>
        <taxon>Pseudomonadaceae</taxon>
        <taxon>Pseudomonas</taxon>
    </lineage>
</organism>
<keyword id="KW-0488">Methylation</keyword>
<keyword id="KW-0687">Ribonucleoprotein</keyword>
<keyword id="KW-0689">Ribosomal protein</keyword>
<keyword id="KW-0694">RNA-binding</keyword>
<keyword id="KW-0699">rRNA-binding</keyword>
<keyword id="KW-0820">tRNA-binding</keyword>